<accession>S7Q0E7</accession>
<gene>
    <name evidence="8" type="primary">LPMO9A</name>
    <name type="ORF">GLOTRDRAFT_45736</name>
</gene>
<sequence>MFRAQSFLPVLALVLRVAAHGYVDQVTIGGQVYTGYQPYQDPYESPVPQRIERAIPGNGPVEDLTLLDIQCNGSGGSGTKPAALIASAAAGDEIAFHWTTWPSSHVGPVITYMGKVPSNTDITSYSPTGSDVIWFKIDEAGYENGKWAATDIMSAQNSTWTVTIPKALAPGQYIVRHEIIALHQAETYPGAQFYPDCFQVQVTGPGTETPTSQALVSFPGGYTPTTPGITFNVYSGSITSYPIPGPPVWTSNEAFSGGSSSSAAASSTAVASSTADSSSSAAATQSSSAAPSSSAIGTSTASSAAASGTAIVDANTCMNSA</sequence>
<dbReference type="EC" id="1.14.99.56" evidence="7"/>
<dbReference type="EMBL" id="KB469306">
    <property type="protein sequence ID" value="EPQ53386.1"/>
    <property type="molecule type" value="Genomic_DNA"/>
</dbReference>
<dbReference type="RefSeq" id="XP_007868189.1">
    <property type="nucleotide sequence ID" value="XM_007869998.1"/>
</dbReference>
<dbReference type="SMR" id="S7Q0E7"/>
<dbReference type="STRING" id="670483.S7Q0E7"/>
<dbReference type="GeneID" id="19306369"/>
<dbReference type="KEGG" id="gtr:GLOTRDRAFT_45736"/>
<dbReference type="eggNOG" id="ENOG502QVRD">
    <property type="taxonomic scope" value="Eukaryota"/>
</dbReference>
<dbReference type="HOGENOM" id="CLU_031730_1_1_1"/>
<dbReference type="OMA" id="QIYPGCH"/>
<dbReference type="OrthoDB" id="4849160at2759"/>
<dbReference type="Proteomes" id="UP000030669">
    <property type="component" value="Unassembled WGS sequence"/>
</dbReference>
<dbReference type="GO" id="GO:0005886">
    <property type="term" value="C:plasma membrane"/>
    <property type="evidence" value="ECO:0007669"/>
    <property type="project" value="UniProtKB-SubCell"/>
</dbReference>
<dbReference type="GO" id="GO:0098552">
    <property type="term" value="C:side of membrane"/>
    <property type="evidence" value="ECO:0007669"/>
    <property type="project" value="UniProtKB-KW"/>
</dbReference>
<dbReference type="GO" id="GO:0046872">
    <property type="term" value="F:metal ion binding"/>
    <property type="evidence" value="ECO:0007669"/>
    <property type="project" value="UniProtKB-KW"/>
</dbReference>
<dbReference type="GO" id="GO:0004497">
    <property type="term" value="F:monooxygenase activity"/>
    <property type="evidence" value="ECO:0007669"/>
    <property type="project" value="UniProtKB-KW"/>
</dbReference>
<dbReference type="GO" id="GO:0030245">
    <property type="term" value="P:cellulose catabolic process"/>
    <property type="evidence" value="ECO:0007669"/>
    <property type="project" value="UniProtKB-KW"/>
</dbReference>
<dbReference type="CDD" id="cd21175">
    <property type="entry name" value="LPMO_AA9"/>
    <property type="match status" value="1"/>
</dbReference>
<dbReference type="Gene3D" id="2.70.50.70">
    <property type="match status" value="1"/>
</dbReference>
<dbReference type="InterPro" id="IPR049892">
    <property type="entry name" value="AA9"/>
</dbReference>
<dbReference type="InterPro" id="IPR005103">
    <property type="entry name" value="AA9_LPMO"/>
</dbReference>
<dbReference type="PANTHER" id="PTHR33353:SF6">
    <property type="entry name" value="ENDOGLUCANASE IV"/>
    <property type="match status" value="1"/>
</dbReference>
<dbReference type="PANTHER" id="PTHR33353">
    <property type="entry name" value="PUTATIVE (AFU_ORTHOLOGUE AFUA_1G12560)-RELATED"/>
    <property type="match status" value="1"/>
</dbReference>
<dbReference type="Pfam" id="PF03443">
    <property type="entry name" value="AA9"/>
    <property type="match status" value="1"/>
</dbReference>
<reference key="1">
    <citation type="journal article" date="2012" name="Science">
        <title>The Paleozoic origin of enzymatic lignin decomposition reconstructed from 31 fungal genomes.</title>
        <authorList>
            <person name="Floudas D."/>
            <person name="Binder M."/>
            <person name="Riley R."/>
            <person name="Barry K."/>
            <person name="Blanchette R.A."/>
            <person name="Henrissat B."/>
            <person name="Martinez A.T."/>
            <person name="Otillar R."/>
            <person name="Spatafora J.W."/>
            <person name="Yadav J.S."/>
            <person name="Aerts A."/>
            <person name="Benoit I."/>
            <person name="Boyd A."/>
            <person name="Carlson A."/>
            <person name="Copeland A."/>
            <person name="Coutinho P.M."/>
            <person name="de Vries R.P."/>
            <person name="Ferreira P."/>
            <person name="Findley K."/>
            <person name="Foster B."/>
            <person name="Gaskell J."/>
            <person name="Glotzer D."/>
            <person name="Gorecki P."/>
            <person name="Heitman J."/>
            <person name="Hesse C."/>
            <person name="Hori C."/>
            <person name="Igarashi K."/>
            <person name="Jurgens J.A."/>
            <person name="Kallen N."/>
            <person name="Kersten P."/>
            <person name="Kohler A."/>
            <person name="Kuees U."/>
            <person name="Kumar T.K.A."/>
            <person name="Kuo A."/>
            <person name="LaButti K."/>
            <person name="Larrondo L.F."/>
            <person name="Lindquist E."/>
            <person name="Ling A."/>
            <person name="Lombard V."/>
            <person name="Lucas S."/>
            <person name="Lundell T."/>
            <person name="Martin R."/>
            <person name="McLaughlin D.J."/>
            <person name="Morgenstern I."/>
            <person name="Morin E."/>
            <person name="Murat C."/>
            <person name="Nagy L.G."/>
            <person name="Nolan M."/>
            <person name="Ohm R.A."/>
            <person name="Patyshakuliyeva A."/>
            <person name="Rokas A."/>
            <person name="Ruiz-Duenas F.J."/>
            <person name="Sabat G."/>
            <person name="Salamov A."/>
            <person name="Samejima M."/>
            <person name="Schmutz J."/>
            <person name="Slot J.C."/>
            <person name="St John F."/>
            <person name="Stenlid J."/>
            <person name="Sun H."/>
            <person name="Sun S."/>
            <person name="Syed K."/>
            <person name="Tsang A."/>
            <person name="Wiebenga A."/>
            <person name="Young D."/>
            <person name="Pisabarro A."/>
            <person name="Eastwood D.C."/>
            <person name="Martin F."/>
            <person name="Cullen D."/>
            <person name="Grigoriev I.V."/>
            <person name="Hibbett D.S."/>
        </authorList>
    </citation>
    <scope>NUCLEOTIDE SEQUENCE [LARGE SCALE GENOMIC DNA]</scope>
    <source>
        <strain>ATCC 11539 / FP-39264 / Madison 617</strain>
    </source>
</reference>
<reference key="2">
    <citation type="journal article" date="2016" name="Appl. Environ. Microbiol.">
        <title>A Lytic Polysaccharide Monooxygenase with Broad Xyloglucan Specificity from the Brown-Rot Fungus Gloeophyllum trabeum and Its Action on Cellulose-Xyloglucan Complexes.</title>
        <authorList>
            <person name="Kojima Y."/>
            <person name="Varnai A."/>
            <person name="Ishida T."/>
            <person name="Sunagawa N."/>
            <person name="Petrovic D.M."/>
            <person name="Igarashi K."/>
            <person name="Jellison J."/>
            <person name="Goodell B."/>
            <person name="Alfredsen G."/>
            <person name="Westereng B."/>
            <person name="Eijsink V.G.H."/>
            <person name="Yoshida M."/>
        </authorList>
    </citation>
    <scope>FUNCTION</scope>
    <scope>CATALYTIC ACTIVITY</scope>
</reference>
<organism>
    <name type="scientific">Gloeophyllum trabeum (strain ATCC 11539 / FP-39264 / Madison 617)</name>
    <name type="common">Brown rot fungus</name>
    <dbReference type="NCBI Taxonomy" id="670483"/>
    <lineage>
        <taxon>Eukaryota</taxon>
        <taxon>Fungi</taxon>
        <taxon>Dikarya</taxon>
        <taxon>Basidiomycota</taxon>
        <taxon>Agaricomycotina</taxon>
        <taxon>Agaricomycetes</taxon>
        <taxon>Gloeophyllales</taxon>
        <taxon>Gloeophyllaceae</taxon>
        <taxon>Gloeophyllum</taxon>
    </lineage>
</organism>
<keyword id="KW-0119">Carbohydrate metabolism</keyword>
<keyword id="KW-1003">Cell membrane</keyword>
<keyword id="KW-0136">Cellulose degradation</keyword>
<keyword id="KW-0186">Copper</keyword>
<keyword id="KW-1015">Disulfide bond</keyword>
<keyword id="KW-0325">Glycoprotein</keyword>
<keyword id="KW-0336">GPI-anchor</keyword>
<keyword id="KW-0449">Lipoprotein</keyword>
<keyword id="KW-0472">Membrane</keyword>
<keyword id="KW-0479">Metal-binding</keyword>
<keyword id="KW-0503">Monooxygenase</keyword>
<keyword id="KW-0560">Oxidoreductase</keyword>
<keyword id="KW-0624">Polysaccharide degradation</keyword>
<keyword id="KW-1185">Reference proteome</keyword>
<keyword id="KW-0732">Signal</keyword>
<feature type="signal peptide" evidence="4">
    <location>
        <begin position="1"/>
        <end position="21"/>
    </location>
</feature>
<feature type="chain" id="PRO_5004543884" description="AA9 family lytic polysaccharide monooxygenase A">
    <location>
        <begin position="22"/>
        <end position="293"/>
    </location>
</feature>
<feature type="propeptide" id="PRO_0000459983" description="Removed in mature form" evidence="4">
    <location>
        <begin position="294"/>
        <end position="321"/>
    </location>
</feature>
<feature type="region of interest" description="Disordered" evidence="6">
    <location>
        <begin position="278"/>
        <end position="306"/>
    </location>
</feature>
<feature type="binding site" evidence="3">
    <location>
        <position position="20"/>
    </location>
    <ligand>
        <name>Cu(2+)</name>
        <dbReference type="ChEBI" id="CHEBI:29036"/>
        <note>catalytic</note>
    </ligand>
</feature>
<feature type="binding site" evidence="3">
    <location>
        <position position="105"/>
    </location>
    <ligand>
        <name>Cu(2+)</name>
        <dbReference type="ChEBI" id="CHEBI:29036"/>
        <note>catalytic</note>
    </ligand>
</feature>
<feature type="binding site" evidence="2">
    <location>
        <position position="183"/>
    </location>
    <ligand>
        <name>O2</name>
        <dbReference type="ChEBI" id="CHEBI:15379"/>
    </ligand>
</feature>
<feature type="binding site" evidence="2">
    <location>
        <position position="192"/>
    </location>
    <ligand>
        <name>O2</name>
        <dbReference type="ChEBI" id="CHEBI:15379"/>
    </ligand>
</feature>
<feature type="binding site" evidence="3">
    <location>
        <position position="194"/>
    </location>
    <ligand>
        <name>Cu(2+)</name>
        <dbReference type="ChEBI" id="CHEBI:29036"/>
        <note>catalytic</note>
    </ligand>
</feature>
<feature type="lipid moiety-binding region" description="GPI-anchor amidated serine" evidence="4">
    <location>
        <position position="293"/>
    </location>
</feature>
<feature type="glycosylation site" description="N-linked (GlcNAc...) asparagine" evidence="5">
    <location>
        <position position="72"/>
    </location>
</feature>
<feature type="glycosylation site" description="N-linked (GlcNAc...) asparagine" evidence="5">
    <location>
        <position position="157"/>
    </location>
</feature>
<feature type="disulfide bond" evidence="1">
    <location>
        <begin position="71"/>
        <end position="197"/>
    </location>
</feature>
<proteinExistence type="evidence at protein level"/>
<evidence type="ECO:0000250" key="1">
    <source>
        <dbReference type="UniProtKB" id="A0A5J6BJN2"/>
    </source>
</evidence>
<evidence type="ECO:0000250" key="2">
    <source>
        <dbReference type="UniProtKB" id="Q1K8B6"/>
    </source>
</evidence>
<evidence type="ECO:0000250" key="3">
    <source>
        <dbReference type="UniProtKB" id="Q7Z9M7"/>
    </source>
</evidence>
<evidence type="ECO:0000255" key="4"/>
<evidence type="ECO:0000255" key="5">
    <source>
        <dbReference type="PROSITE-ProRule" id="PRU00498"/>
    </source>
</evidence>
<evidence type="ECO:0000256" key="6">
    <source>
        <dbReference type="SAM" id="MobiDB-lite"/>
    </source>
</evidence>
<evidence type="ECO:0000269" key="7">
    <source>
    </source>
</evidence>
<evidence type="ECO:0000303" key="8">
    <source>
    </source>
</evidence>
<evidence type="ECO:0000305" key="9"/>
<comment type="function">
    <text evidence="7">Lytic polysaccharide monooxygenase (LPMO) that depolymerizes crystalline and amorphous polysaccharides via the oxidation of scissile alpha- or beta-(1-4)-glycosidic bonds, yielding C1 or C4 oxidation products (PubMed:27590806). Catalysis by LPMOs requires the reduction of the active-site copper from Cu(II) to Cu(I) by a reducing agent and H(2)O(2) or O(2) as a cosubstrate (PubMed:27590806). Has broad specificity, cleaving at any position along the beta-glucan backbone of xyloglucan, regardless of substitutions (PubMed:27590806). Shows minor activity on glucomannan (PubMed:27590806).</text>
</comment>
<comment type="catalytic activity">
    <reaction evidence="7">
        <text>[(1-&gt;4)-beta-D-glucosyl]n+m + reduced acceptor + O2 = 4-dehydro-beta-D-glucosyl-[(1-&gt;4)-beta-D-glucosyl]n-1 + [(1-&gt;4)-beta-D-glucosyl]m + acceptor + H2O.</text>
        <dbReference type="EC" id="1.14.99.56"/>
    </reaction>
</comment>
<comment type="cofactor">
    <cofactor evidence="2">
        <name>Cu(2+)</name>
        <dbReference type="ChEBI" id="CHEBI:29036"/>
    </cofactor>
    <text evidence="2">Binds 1 copper ion per subunit.</text>
</comment>
<comment type="subcellular location">
    <subcellularLocation>
        <location evidence="4">Cell membrane</location>
        <topology evidence="4">Lipid-anchor</topology>
        <topology evidence="4">GPI-anchor</topology>
    </subcellularLocation>
</comment>
<comment type="biotechnology">
    <text evidence="2">Lignocellulose is the most abundant polymeric composite on Earth and is a recalcitrant but promising renewable substrate for industrial biotechnology applications. Together with cellobiose dehydrogenases (CDHs) an enzymatic system capable of oxidative cellulose cleavage is formed, which increases the efficiency of cellulases and put LPMOs at focus of biofuel research.</text>
</comment>
<comment type="similarity">
    <text evidence="9">Belongs to the polysaccharide monooxygenase AA9 family.</text>
</comment>
<protein>
    <recommendedName>
        <fullName evidence="8">AA9 family lytic polysaccharide monooxygenase A</fullName>
        <shortName evidence="8">LPMO9A</shortName>
        <ecNumber evidence="7">1.14.99.56</ecNumber>
    </recommendedName>
    <alternativeName>
        <fullName evidence="9">Cellulase LPMO9A</fullName>
    </alternativeName>
    <alternativeName>
        <fullName evidence="9">Endo-beta-1,4-glucanase LPMO9A</fullName>
        <shortName evidence="9">Endoglucanase LPMO9A</shortName>
    </alternativeName>
    <alternativeName>
        <fullName evidence="9">Glycosyl hydrolase 61 family protein LPMO9A</fullName>
    </alternativeName>
</protein>
<name>LP9A_GLOTA</name>